<keyword id="KW-0378">Hydrolase</keyword>
<feature type="chain" id="PRO_1000215465" description="Guanosine-5'-triphosphate,3'-diphosphate pyrophosphatase">
    <location>
        <begin position="1"/>
        <end position="494"/>
    </location>
</feature>
<evidence type="ECO:0000255" key="1">
    <source>
        <dbReference type="HAMAP-Rule" id="MF_01550"/>
    </source>
</evidence>
<accession>C4ZZ47</accession>
<protein>
    <recommendedName>
        <fullName evidence="1">Guanosine-5'-triphosphate,3'-diphosphate pyrophosphatase</fullName>
        <ecNumber evidence="1">3.6.1.40</ecNumber>
    </recommendedName>
    <alternativeName>
        <fullName evidence="1">Guanosine pentaphosphate phosphohydrolase</fullName>
    </alternativeName>
    <alternativeName>
        <fullName evidence="1">pppGpp-5'-phosphohydrolase</fullName>
    </alternativeName>
</protein>
<reference key="1">
    <citation type="journal article" date="2009" name="J. Bacteriol.">
        <title>Genomic sequencing reveals regulatory mutations and recombinational events in the widely used MC4100 lineage of Escherichia coli K-12.</title>
        <authorList>
            <person name="Ferenci T."/>
            <person name="Zhou Z."/>
            <person name="Betteridge T."/>
            <person name="Ren Y."/>
            <person name="Liu Y."/>
            <person name="Feng L."/>
            <person name="Reeves P.R."/>
            <person name="Wang L."/>
        </authorList>
    </citation>
    <scope>NUCLEOTIDE SEQUENCE [LARGE SCALE GENOMIC DNA]</scope>
    <source>
        <strain>K12 / MC4100 / BW2952</strain>
    </source>
</reference>
<organism>
    <name type="scientific">Escherichia coli (strain K12 / MC4100 / BW2952)</name>
    <dbReference type="NCBI Taxonomy" id="595496"/>
    <lineage>
        <taxon>Bacteria</taxon>
        <taxon>Pseudomonadati</taxon>
        <taxon>Pseudomonadota</taxon>
        <taxon>Gammaproteobacteria</taxon>
        <taxon>Enterobacterales</taxon>
        <taxon>Enterobacteriaceae</taxon>
        <taxon>Escherichia</taxon>
    </lineage>
</organism>
<name>GPPA_ECOBW</name>
<comment type="function">
    <text evidence="1">Catalyzes the conversion of pppGpp to ppGpp. Guanosine pentaphosphate (pppGpp) is a cytoplasmic signaling molecule which together with ppGpp controls the 'stringent response', an adaptive process that allows bacteria to respond to amino acid starvation, resulting in the coordinated regulation of numerous cellular activities.</text>
</comment>
<comment type="catalytic activity">
    <reaction evidence="1">
        <text>guanosine 3'-diphosphate 5'-triphosphate + H2O = guanosine 3',5'-bis(diphosphate) + phosphate + H(+)</text>
        <dbReference type="Rhea" id="RHEA:13073"/>
        <dbReference type="ChEBI" id="CHEBI:15377"/>
        <dbReference type="ChEBI" id="CHEBI:15378"/>
        <dbReference type="ChEBI" id="CHEBI:43474"/>
        <dbReference type="ChEBI" id="CHEBI:77828"/>
        <dbReference type="ChEBI" id="CHEBI:142410"/>
        <dbReference type="EC" id="3.6.1.40"/>
    </reaction>
</comment>
<comment type="pathway">
    <text evidence="1">Purine metabolism; ppGpp biosynthesis; ppGpp from GTP: step 2/2.</text>
</comment>
<comment type="similarity">
    <text evidence="1">Belongs to the GppA/Ppx family. GppA subfamily.</text>
</comment>
<dbReference type="EC" id="3.6.1.40" evidence="1"/>
<dbReference type="EMBL" id="CP001396">
    <property type="protein sequence ID" value="ACR63395.1"/>
    <property type="molecule type" value="Genomic_DNA"/>
</dbReference>
<dbReference type="RefSeq" id="WP_001295254.1">
    <property type="nucleotide sequence ID" value="NC_012759.1"/>
</dbReference>
<dbReference type="SMR" id="C4ZZ47"/>
<dbReference type="GeneID" id="75174011"/>
<dbReference type="KEGG" id="ebw:BWG_3462"/>
<dbReference type="HOGENOM" id="CLU_025908_4_0_6"/>
<dbReference type="UniPathway" id="UPA00908">
    <property type="reaction ID" value="UER00885"/>
</dbReference>
<dbReference type="GO" id="GO:0008894">
    <property type="term" value="F:guanosine-5'-triphosphate,3'-diphosphate diphosphatase activity"/>
    <property type="evidence" value="ECO:0007669"/>
    <property type="project" value="UniProtKB-UniRule"/>
</dbReference>
<dbReference type="GO" id="GO:0015974">
    <property type="term" value="P:guanosine pentaphosphate catabolic process"/>
    <property type="evidence" value="ECO:0007669"/>
    <property type="project" value="InterPro"/>
</dbReference>
<dbReference type="GO" id="GO:0015970">
    <property type="term" value="P:guanosine tetraphosphate biosynthetic process"/>
    <property type="evidence" value="ECO:0007669"/>
    <property type="project" value="UniProtKB-UniRule"/>
</dbReference>
<dbReference type="GO" id="GO:0015949">
    <property type="term" value="P:nucleobase-containing small molecule interconversion"/>
    <property type="evidence" value="ECO:0007669"/>
    <property type="project" value="TreeGrafter"/>
</dbReference>
<dbReference type="CDD" id="cd24117">
    <property type="entry name" value="ASKHA_NBD_EcGppA-like"/>
    <property type="match status" value="1"/>
</dbReference>
<dbReference type="FunFam" id="1.10.3210.10:FF:000004">
    <property type="entry name" value="Guanosine-5'-triphosphate,3'-diphosphate pyrophosphatase"/>
    <property type="match status" value="1"/>
</dbReference>
<dbReference type="FunFam" id="3.30.420.150:FF:000001">
    <property type="entry name" value="Guanosine-5'-triphosphate,3'-diphosphate pyrophosphatase"/>
    <property type="match status" value="1"/>
</dbReference>
<dbReference type="FunFam" id="3.30.420.40:FF:000023">
    <property type="entry name" value="Guanosine-5'-triphosphate,3'-diphosphate pyrophosphatase"/>
    <property type="match status" value="1"/>
</dbReference>
<dbReference type="Gene3D" id="3.30.420.40">
    <property type="match status" value="1"/>
</dbReference>
<dbReference type="Gene3D" id="3.30.420.150">
    <property type="entry name" value="Exopolyphosphatase. Domain 2"/>
    <property type="match status" value="1"/>
</dbReference>
<dbReference type="Gene3D" id="1.10.3210.10">
    <property type="entry name" value="Hypothetical protein af1432"/>
    <property type="match status" value="1"/>
</dbReference>
<dbReference type="HAMAP" id="MF_01550">
    <property type="entry name" value="GppA"/>
    <property type="match status" value="1"/>
</dbReference>
<dbReference type="InterPro" id="IPR043129">
    <property type="entry name" value="ATPase_NBD"/>
</dbReference>
<dbReference type="InterPro" id="IPR050273">
    <property type="entry name" value="GppA/Ppx_hydrolase"/>
</dbReference>
<dbReference type="InterPro" id="IPR023709">
    <property type="entry name" value="Guo-5TP_3DP_PyrP"/>
</dbReference>
<dbReference type="InterPro" id="IPR048950">
    <property type="entry name" value="Ppx_GppA_C"/>
</dbReference>
<dbReference type="InterPro" id="IPR003695">
    <property type="entry name" value="Ppx_GppA_N"/>
</dbReference>
<dbReference type="InterPro" id="IPR030673">
    <property type="entry name" value="PyroPPase_GppA_Ppx"/>
</dbReference>
<dbReference type="NCBIfam" id="NF008260">
    <property type="entry name" value="PRK11031.1"/>
    <property type="match status" value="1"/>
</dbReference>
<dbReference type="PANTHER" id="PTHR30005">
    <property type="entry name" value="EXOPOLYPHOSPHATASE"/>
    <property type="match status" value="1"/>
</dbReference>
<dbReference type="PANTHER" id="PTHR30005:SF0">
    <property type="entry name" value="RETROGRADE REGULATION PROTEIN 2"/>
    <property type="match status" value="1"/>
</dbReference>
<dbReference type="Pfam" id="PF02541">
    <property type="entry name" value="Ppx-GppA"/>
    <property type="match status" value="1"/>
</dbReference>
<dbReference type="Pfam" id="PF21447">
    <property type="entry name" value="Ppx-GppA_III"/>
    <property type="match status" value="1"/>
</dbReference>
<dbReference type="PIRSF" id="PIRSF001267">
    <property type="entry name" value="Pyrophosphatase_GppA_Ppx"/>
    <property type="match status" value="1"/>
</dbReference>
<dbReference type="SUPFAM" id="SSF53067">
    <property type="entry name" value="Actin-like ATPase domain"/>
    <property type="match status" value="2"/>
</dbReference>
<dbReference type="SUPFAM" id="SSF109604">
    <property type="entry name" value="HD-domain/PDEase-like"/>
    <property type="match status" value="1"/>
</dbReference>
<gene>
    <name evidence="1" type="primary">gppA</name>
    <name type="ordered locus">BWG_3462</name>
</gene>
<proteinExistence type="inferred from homology"/>
<sequence>MGSTSSLYAAIDLGSNSFHMLVVREVAGSIQTLTRIKRKVRLAAGLNSENALSNEAMERGWQCLRLFAERLQDIPPSQIRVVATATLRLAVNAGDFIAKAQEILGCPVQVISGEEEARLIYQGVAHTTGGADQRLVVDIGGASTELVTGTGAQTTSLFSLSMGCVTWLERYFADRNLGQENFDAAEKAAREVLRPVADELRYHGWKVCVGASGTVQALQEIMMAQGMDERITLEKLQQLKQRAIHCGRLEELEIDGLTLERALVFPSGLAILIAIFTELNIQCMTLAGGALREGLVYGMLHLAVEQDIRSRTLRNIQRRFMIDIDQAQRVAKVAANFFDQVENEWHLEAISRDLLISACQLHEIGLSVDFKQAPQHAAYLVRNLDLPGFTPAQKKLLATLLLNQTNPVDLSSLHQQNAVPPRVAEQLCRLLRLAIIFASRRRDDLVPEMTLQANHELLTLTLPQGWLTQHPLGKEIIAQESQWQSYVHWPLEVH</sequence>